<protein>
    <recommendedName>
        <fullName>Probable alcohol dehydrogenase</fullName>
        <ecNumber>1.1.1.1</ecNumber>
    </recommendedName>
</protein>
<keyword id="KW-0479">Metal-binding</keyword>
<keyword id="KW-0520">NAD</keyword>
<keyword id="KW-0560">Oxidoreductase</keyword>
<keyword id="KW-0862">Zinc</keyword>
<organism>
    <name type="scientific">Pseudomonas sp</name>
    <dbReference type="NCBI Taxonomy" id="306"/>
    <lineage>
        <taxon>Bacteria</taxon>
        <taxon>Pseudomonadati</taxon>
        <taxon>Pseudomonadota</taxon>
        <taxon>Gammaproteobacteria</taxon>
        <taxon>Pseudomonadales</taxon>
        <taxon>Pseudomonadaceae</taxon>
        <taxon>Pseudomonas</taxon>
    </lineage>
</organism>
<sequence>MPRREMMKCLFVSESCVCHTDLAIKDGVLPFPLPAVLGHEGSGIVEAVGPGVKHLKPGDAVVMTFASCGHCASCEHERPSYCLDFGAQNYSAQRADGPVLLSQGDEVISGFFFGQSSFSSMAMAREHNLVKIDALVDDAPIELLGPLGCGVQTGAGAVMISLDVRAGRSFLVLGGGAVGLSAVMAAKLRGCSRIIVSEPSAAKREQALALGATEVIDPLNENLVERVQQITEGQGCDYALECTGLVSVMEQAIDSMAMRGQLAVVGVPPKLDATAAVSPLALIQKGLKLMGVIEGDSCRVYSSTSCTRSSRLGVFRSPR</sequence>
<feature type="chain" id="PRO_0000160751" description="Probable alcohol dehydrogenase">
    <location>
        <begin position="1"/>
        <end position="319"/>
    </location>
</feature>
<feature type="binding site" evidence="1">
    <location>
        <position position="18"/>
    </location>
    <ligand>
        <name>Zn(2+)</name>
        <dbReference type="ChEBI" id="CHEBI:29105"/>
        <label>1</label>
        <note>catalytic</note>
    </ligand>
</feature>
<feature type="binding site" evidence="1">
    <location>
        <position position="39"/>
    </location>
    <ligand>
        <name>Zn(2+)</name>
        <dbReference type="ChEBI" id="CHEBI:29105"/>
        <label>1</label>
        <note>catalytic</note>
    </ligand>
</feature>
<feature type="binding site" evidence="1">
    <location>
        <position position="68"/>
    </location>
    <ligand>
        <name>Zn(2+)</name>
        <dbReference type="ChEBI" id="CHEBI:29105"/>
        <label>2</label>
    </ligand>
</feature>
<feature type="binding site" evidence="1">
    <location>
        <position position="71"/>
    </location>
    <ligand>
        <name>Zn(2+)</name>
        <dbReference type="ChEBI" id="CHEBI:29105"/>
        <label>2</label>
    </ligand>
</feature>
<feature type="binding site" evidence="1">
    <location>
        <position position="74"/>
    </location>
    <ligand>
        <name>Zn(2+)</name>
        <dbReference type="ChEBI" id="CHEBI:29105"/>
        <label>2</label>
    </ligand>
</feature>
<feature type="binding site" evidence="1">
    <location>
        <position position="82"/>
    </location>
    <ligand>
        <name>Zn(2+)</name>
        <dbReference type="ChEBI" id="CHEBI:29105"/>
        <label>2</label>
    </ligand>
</feature>
<feature type="binding site" evidence="1">
    <location>
        <position position="149"/>
    </location>
    <ligand>
        <name>Zn(2+)</name>
        <dbReference type="ChEBI" id="CHEBI:29105"/>
        <label>1</label>
        <note>catalytic</note>
    </ligand>
</feature>
<reference key="1">
    <citation type="journal article" date="1992" name="J. Biol. Chem.">
        <title>Cytochrome P-450terp. Isolation and purification of the protein and cloning and sequencing of its operon.</title>
        <authorList>
            <person name="Peterson J.A."/>
            <person name="Lu J.-Y."/>
            <person name="Geisselsoder J."/>
            <person name="Graham-Lorence S."/>
            <person name="Carmona C."/>
            <person name="Witney F."/>
            <person name="Lorence M.C."/>
        </authorList>
    </citation>
    <scope>NUCLEOTIDE SEQUENCE [GENOMIC DNA]</scope>
</reference>
<dbReference type="EC" id="1.1.1.1"/>
<dbReference type="EMBL" id="M91440">
    <property type="protein sequence ID" value="AAA25994.1"/>
    <property type="molecule type" value="Genomic_DNA"/>
</dbReference>
<dbReference type="PIR" id="B42971">
    <property type="entry name" value="B42971"/>
</dbReference>
<dbReference type="SMR" id="P33010"/>
<dbReference type="GO" id="GO:0005829">
    <property type="term" value="C:cytosol"/>
    <property type="evidence" value="ECO:0007669"/>
    <property type="project" value="TreeGrafter"/>
</dbReference>
<dbReference type="GO" id="GO:0004022">
    <property type="term" value="F:alcohol dehydrogenase (NAD+) activity"/>
    <property type="evidence" value="ECO:0007669"/>
    <property type="project" value="UniProtKB-EC"/>
</dbReference>
<dbReference type="GO" id="GO:0051903">
    <property type="term" value="F:S-(hydroxymethyl)glutathione dehydrogenase [NAD(P)+] activity"/>
    <property type="evidence" value="ECO:0007669"/>
    <property type="project" value="TreeGrafter"/>
</dbReference>
<dbReference type="GO" id="GO:0008270">
    <property type="term" value="F:zinc ion binding"/>
    <property type="evidence" value="ECO:0007669"/>
    <property type="project" value="InterPro"/>
</dbReference>
<dbReference type="GO" id="GO:0046294">
    <property type="term" value="P:formaldehyde catabolic process"/>
    <property type="evidence" value="ECO:0007669"/>
    <property type="project" value="TreeGrafter"/>
</dbReference>
<dbReference type="FunFam" id="3.40.50.720:FF:000003">
    <property type="entry name" value="S-(hydroxymethyl)glutathione dehydrogenase"/>
    <property type="match status" value="1"/>
</dbReference>
<dbReference type="Gene3D" id="3.90.180.10">
    <property type="entry name" value="Medium-chain alcohol dehydrogenases, catalytic domain"/>
    <property type="match status" value="1"/>
</dbReference>
<dbReference type="Gene3D" id="3.40.50.720">
    <property type="entry name" value="NAD(P)-binding Rossmann-like Domain"/>
    <property type="match status" value="1"/>
</dbReference>
<dbReference type="InterPro" id="IPR013149">
    <property type="entry name" value="ADH-like_C"/>
</dbReference>
<dbReference type="InterPro" id="IPR013154">
    <property type="entry name" value="ADH-like_N"/>
</dbReference>
<dbReference type="InterPro" id="IPR002328">
    <property type="entry name" value="ADH_Zn_CS"/>
</dbReference>
<dbReference type="InterPro" id="IPR011032">
    <property type="entry name" value="GroES-like_sf"/>
</dbReference>
<dbReference type="InterPro" id="IPR036291">
    <property type="entry name" value="NAD(P)-bd_dom_sf"/>
</dbReference>
<dbReference type="PANTHER" id="PTHR43880">
    <property type="entry name" value="ALCOHOL DEHYDROGENASE"/>
    <property type="match status" value="1"/>
</dbReference>
<dbReference type="PANTHER" id="PTHR43880:SF12">
    <property type="entry name" value="ALCOHOL DEHYDROGENASE CLASS-3"/>
    <property type="match status" value="1"/>
</dbReference>
<dbReference type="Pfam" id="PF08240">
    <property type="entry name" value="ADH_N"/>
    <property type="match status" value="1"/>
</dbReference>
<dbReference type="Pfam" id="PF00107">
    <property type="entry name" value="ADH_zinc_N"/>
    <property type="match status" value="1"/>
</dbReference>
<dbReference type="SUPFAM" id="SSF50129">
    <property type="entry name" value="GroES-like"/>
    <property type="match status" value="1"/>
</dbReference>
<dbReference type="SUPFAM" id="SSF51735">
    <property type="entry name" value="NAD(P)-binding Rossmann-fold domains"/>
    <property type="match status" value="1"/>
</dbReference>
<dbReference type="PROSITE" id="PS00059">
    <property type="entry name" value="ADH_ZINC"/>
    <property type="match status" value="1"/>
</dbReference>
<name>TERPD_PSESP</name>
<accession>P33010</accession>
<evidence type="ECO:0000250" key="1"/>
<evidence type="ECO:0000305" key="2"/>
<proteinExistence type="inferred from homology"/>
<comment type="catalytic activity">
    <reaction>
        <text>a primary alcohol + NAD(+) = an aldehyde + NADH + H(+)</text>
        <dbReference type="Rhea" id="RHEA:10736"/>
        <dbReference type="ChEBI" id="CHEBI:15378"/>
        <dbReference type="ChEBI" id="CHEBI:15734"/>
        <dbReference type="ChEBI" id="CHEBI:17478"/>
        <dbReference type="ChEBI" id="CHEBI:57540"/>
        <dbReference type="ChEBI" id="CHEBI:57945"/>
        <dbReference type="EC" id="1.1.1.1"/>
    </reaction>
</comment>
<comment type="catalytic activity">
    <reaction>
        <text>a secondary alcohol + NAD(+) = a ketone + NADH + H(+)</text>
        <dbReference type="Rhea" id="RHEA:10740"/>
        <dbReference type="ChEBI" id="CHEBI:15378"/>
        <dbReference type="ChEBI" id="CHEBI:17087"/>
        <dbReference type="ChEBI" id="CHEBI:35681"/>
        <dbReference type="ChEBI" id="CHEBI:57540"/>
        <dbReference type="ChEBI" id="CHEBI:57945"/>
        <dbReference type="EC" id="1.1.1.1"/>
    </reaction>
</comment>
<comment type="cofactor">
    <cofactor evidence="1">
        <name>Zn(2+)</name>
        <dbReference type="ChEBI" id="CHEBI:29105"/>
    </cofactor>
    <text evidence="1">Binds 2 Zn(2+) ions per subunit.</text>
</comment>
<comment type="similarity">
    <text evidence="2">Belongs to the zinc-containing alcohol dehydrogenase family.</text>
</comment>
<gene>
    <name type="primary">terPD</name>
</gene>